<organism>
    <name type="scientific">Caenorhabditis elegans</name>
    <dbReference type="NCBI Taxonomy" id="6239"/>
    <lineage>
        <taxon>Eukaryota</taxon>
        <taxon>Metazoa</taxon>
        <taxon>Ecdysozoa</taxon>
        <taxon>Nematoda</taxon>
        <taxon>Chromadorea</taxon>
        <taxon>Rhabditida</taxon>
        <taxon>Rhabditina</taxon>
        <taxon>Rhabditomorpha</taxon>
        <taxon>Rhabditoidea</taxon>
        <taxon>Rhabditidae</taxon>
        <taxon>Peloderinae</taxon>
        <taxon>Caenorhabditis</taxon>
    </lineage>
</organism>
<keyword id="KW-1185">Reference proteome</keyword>
<comment type="sequence caution" evidence="2">
    <conflict type="erroneous gene model prediction">
        <sequence resource="EMBL-CDS" id="CCD67405"/>
    </conflict>
</comment>
<name>YQI8_CAEEL</name>
<protein>
    <recommendedName>
        <fullName>Uncharacterized protein C45G9.8</fullName>
    </recommendedName>
</protein>
<reference key="1">
    <citation type="journal article" date="1998" name="Science">
        <title>Genome sequence of the nematode C. elegans: a platform for investigating biology.</title>
        <authorList>
            <consortium name="The C. elegans sequencing consortium"/>
        </authorList>
    </citation>
    <scope>NUCLEOTIDE SEQUENCE [LARGE SCALE GENOMIC DNA]</scope>
    <source>
        <strain>Bristol N2</strain>
    </source>
</reference>
<sequence length="465" mass="53756">MRLLVCFGFFSFTYFFSRKGTRSYFRWVSTETSNNTRSKCHKLKSESIMTTSLLSRMQIDRDLRRSTEHVEIVPQETCVHHESPDSVLTECATMSTSTHVMPNSSSTISKSATEKKTKTGSKKVTRSKKSKKTKRRSSTTVTTTTISNSKPVTPDKDKDSKDQRKQRTKRKDPFEKEWFGKECDDVTRCKVPIQEFKIAEVQLRPRIEEDQNIEVTSRDIDEADMERICKKFAKEKINPITMAEPIDEKTKILLDRVTKKPYPLKYNNEKGLLLFDERSSFYKSREKKKAEKSESNLEEDTYGQVPKLKDVQRLPPQNVFSRPGVPFWAVTLLPTEEDLVDVDPSISVGTEHLEMYHLKQVPLQTIKKSKLILNALQPLSILEDRDDIHFTPELVFSNTIRSLVHAQEMEGKRNESKSDDEGKSDKSLSFVIEKQEEFIYSRANPIETARMARRNRRSKGSSSKK</sequence>
<gene>
    <name type="ORF">C45G9.8</name>
</gene>
<accession>Q09280</accession>
<accession>A8WFG2</accession>
<proteinExistence type="predicted"/>
<feature type="chain" id="PRO_0000065240" description="Uncharacterized protein C45G9.8">
    <location>
        <begin position="1"/>
        <end position="465"/>
    </location>
</feature>
<feature type="region of interest" description="Disordered" evidence="1">
    <location>
        <begin position="95"/>
        <end position="173"/>
    </location>
</feature>
<feature type="region of interest" description="Disordered" evidence="1">
    <location>
        <begin position="407"/>
        <end position="426"/>
    </location>
</feature>
<feature type="region of interest" description="Disordered" evidence="1">
    <location>
        <begin position="443"/>
        <end position="465"/>
    </location>
</feature>
<feature type="compositionally biased region" description="Basic residues" evidence="1">
    <location>
        <begin position="118"/>
        <end position="137"/>
    </location>
</feature>
<feature type="compositionally biased region" description="Low complexity" evidence="1">
    <location>
        <begin position="138"/>
        <end position="150"/>
    </location>
</feature>
<feature type="compositionally biased region" description="Basic and acidic residues" evidence="1">
    <location>
        <begin position="153"/>
        <end position="173"/>
    </location>
</feature>
<feature type="compositionally biased region" description="Basic residues" evidence="1">
    <location>
        <begin position="451"/>
        <end position="465"/>
    </location>
</feature>
<dbReference type="EMBL" id="FO080873">
    <property type="protein sequence ID" value="CCD67405.1"/>
    <property type="status" value="ALT_SEQ"/>
    <property type="molecule type" value="Genomic_DNA"/>
</dbReference>
<dbReference type="PIR" id="D88448">
    <property type="entry name" value="D88448"/>
</dbReference>
<dbReference type="RefSeq" id="NP_498073.2">
    <property type="nucleotide sequence ID" value="NM_065672.2"/>
</dbReference>
<dbReference type="FunCoup" id="Q09280">
    <property type="interactions" value="4"/>
</dbReference>
<dbReference type="PaxDb" id="6239-C45G9.15"/>
<dbReference type="EnsemblMetazoa" id="C45G9.8.1">
    <property type="protein sequence ID" value="C45G9.8.1"/>
    <property type="gene ID" value="WBGene00016679"/>
</dbReference>
<dbReference type="EnsemblMetazoa" id="C45G9.8.2">
    <property type="protein sequence ID" value="C45G9.8.2"/>
    <property type="gene ID" value="WBGene00016679"/>
</dbReference>
<dbReference type="EnsemblMetazoa" id="C45G9.8.3">
    <property type="protein sequence ID" value="C45G9.8.3"/>
    <property type="gene ID" value="WBGene00016679"/>
</dbReference>
<dbReference type="UCSC" id="C45G9.8">
    <property type="organism name" value="c. elegans"/>
</dbReference>
<dbReference type="AGR" id="WB:WBGene00016679"/>
<dbReference type="WormBase" id="C45G9.8">
    <property type="protein sequence ID" value="CE41619"/>
    <property type="gene ID" value="WBGene00016679"/>
</dbReference>
<dbReference type="eggNOG" id="ENOG502SVY6">
    <property type="taxonomic scope" value="Eukaryota"/>
</dbReference>
<dbReference type="HOGENOM" id="CLU_068326_0_0_1"/>
<dbReference type="InParanoid" id="Q09280"/>
<dbReference type="OrthoDB" id="5797631at2759"/>
<dbReference type="PRO" id="PR:Q09280"/>
<dbReference type="Proteomes" id="UP000001940">
    <property type="component" value="Chromosome III"/>
</dbReference>
<dbReference type="Bgee" id="WBGene00016679">
    <property type="expression patterns" value="Expressed in larva and 2 other cell types or tissues"/>
</dbReference>
<dbReference type="InterPro" id="IPR008569">
    <property type="entry name" value="DUF851"/>
</dbReference>
<dbReference type="PANTHER" id="PTHR21592">
    <property type="entry name" value="CHROMOSOME UNDETERMINED SCAFFOLD_25, WHOLE GENOME SHOTGUN SEQUENCE"/>
    <property type="match status" value="1"/>
</dbReference>
<dbReference type="PANTHER" id="PTHR21592:SF7">
    <property type="entry name" value="DNA-DIRECTED RNA POLYMERASE III SUBUNIT RPC4-RELATED"/>
    <property type="match status" value="1"/>
</dbReference>
<dbReference type="Pfam" id="PF05867">
    <property type="entry name" value="DUF851"/>
    <property type="match status" value="1"/>
</dbReference>
<evidence type="ECO:0000256" key="1">
    <source>
        <dbReference type="SAM" id="MobiDB-lite"/>
    </source>
</evidence>
<evidence type="ECO:0000305" key="2"/>